<sequence length="111" mass="12944">MRKIARLLNWVSIDLLILVECFHQKGLLHHRLSLLVQQHLLHRDEVGYDGYYDELCSYYTAILHPRPPLHRLRHHHYSGVDSLPLSNAMTVTLTVPPLHVVVCRLHFSLPV</sequence>
<accession>P36074</accession>
<organism>
    <name type="scientific">Saccharomyces cerevisiae (strain ATCC 204508 / S288c)</name>
    <name type="common">Baker's yeast</name>
    <dbReference type="NCBI Taxonomy" id="559292"/>
    <lineage>
        <taxon>Eukaryota</taxon>
        <taxon>Fungi</taxon>
        <taxon>Dikarya</taxon>
        <taxon>Ascomycota</taxon>
        <taxon>Saccharomycotina</taxon>
        <taxon>Saccharomycetes</taxon>
        <taxon>Saccharomycetales</taxon>
        <taxon>Saccharomycetaceae</taxon>
        <taxon>Saccharomyces</taxon>
    </lineage>
</organism>
<dbReference type="EMBL" id="S93804">
    <property type="status" value="NOT_ANNOTATED_CDS"/>
    <property type="molecule type" value="Genomic_DNA"/>
</dbReference>
<dbReference type="EMBL" id="Z28111">
    <property type="protein sequence ID" value="CAA81952.1"/>
    <property type="molecule type" value="Genomic_DNA"/>
</dbReference>
<dbReference type="PIR" id="S37939">
    <property type="entry name" value="S37939"/>
</dbReference>
<dbReference type="DIP" id="DIP-5090N"/>
<dbReference type="STRING" id="4932.YKL111C"/>
<dbReference type="PaxDb" id="4932-YKL111C"/>
<dbReference type="EnsemblFungi" id="YKL111C_mRNA">
    <property type="protein sequence ID" value="YKL111C"/>
    <property type="gene ID" value="YKL111C"/>
</dbReference>
<dbReference type="AGR" id="SGD:S000001594"/>
<dbReference type="SGD" id="S000001594">
    <property type="gene designation" value="YKL111C"/>
</dbReference>
<dbReference type="HOGENOM" id="CLU_2160376_0_0_1"/>
<evidence type="ECO:0000305" key="1"/>
<evidence type="ECO:0000305" key="2">
    <source>
    </source>
</evidence>
<gene>
    <name type="ordered locus">YKL111C</name>
</gene>
<comment type="miscellaneous">
    <text evidence="1">Partially overlaps ABF1.</text>
</comment>
<comment type="caution">
    <text evidence="2">Product of a dubious gene prediction unlikely to encode a functional protein. Because of that it is not part of the S.cerevisiae S288c complete/reference proteome set.</text>
</comment>
<proteinExistence type="uncertain"/>
<name>YKL1_YEAST</name>
<feature type="chain" id="PRO_0000203157" description="Putative uncharacterized protein YKL111C">
    <location>
        <begin position="1"/>
        <end position="111"/>
    </location>
</feature>
<reference key="1">
    <citation type="journal article" date="1992" name="Yeast">
        <title>Sequence of a 10.7 kb segment of yeast chromosome XI identifies the APN1 and the BAF1 loci and reveals one tRNA gene and several new open reading frames including homologs to RAD2 and kinases.</title>
        <authorList>
            <person name="Jacquier A."/>
            <person name="Legrain P."/>
            <person name="Dujon B."/>
        </authorList>
    </citation>
    <scope>NUCLEOTIDE SEQUENCE [GENOMIC DNA]</scope>
</reference>
<reference key="2">
    <citation type="journal article" date="1994" name="Nature">
        <title>Complete DNA sequence of yeast chromosome XI.</title>
        <authorList>
            <person name="Dujon B."/>
            <person name="Alexandraki D."/>
            <person name="Andre B."/>
            <person name="Ansorge W."/>
            <person name="Baladron V."/>
            <person name="Ballesta J.P.G."/>
            <person name="Banrevi A."/>
            <person name="Bolle P.-A."/>
            <person name="Bolotin-Fukuhara M."/>
            <person name="Bossier P."/>
            <person name="Bou G."/>
            <person name="Boyer J."/>
            <person name="Buitrago M.J."/>
            <person name="Cheret G."/>
            <person name="Colleaux L."/>
            <person name="Daignan-Fornier B."/>
            <person name="del Rey F."/>
            <person name="Dion C."/>
            <person name="Domdey H."/>
            <person name="Duesterhoeft A."/>
            <person name="Duesterhus S."/>
            <person name="Entian K.-D."/>
            <person name="Erfle H."/>
            <person name="Esteban P.F."/>
            <person name="Feldmann H."/>
            <person name="Fernandes L."/>
            <person name="Fobo G.M."/>
            <person name="Fritz C."/>
            <person name="Fukuhara H."/>
            <person name="Gabel C."/>
            <person name="Gaillon L."/>
            <person name="Garcia-Cantalejo J.M."/>
            <person name="Garcia-Ramirez J.J."/>
            <person name="Gent M.E."/>
            <person name="Ghazvini M."/>
            <person name="Goffeau A."/>
            <person name="Gonzalez A."/>
            <person name="Grothues D."/>
            <person name="Guerreiro P."/>
            <person name="Hegemann J.H."/>
            <person name="Hewitt N."/>
            <person name="Hilger F."/>
            <person name="Hollenberg C.P."/>
            <person name="Horaitis O."/>
            <person name="Indge K.J."/>
            <person name="Jacquier A."/>
            <person name="James C.M."/>
            <person name="Jauniaux J.-C."/>
            <person name="Jimenez A."/>
            <person name="Keuchel H."/>
            <person name="Kirchrath L."/>
            <person name="Kleine K."/>
            <person name="Koetter P."/>
            <person name="Legrain P."/>
            <person name="Liebl S."/>
            <person name="Louis E.J."/>
            <person name="Maia e Silva A."/>
            <person name="Marck C."/>
            <person name="Monnier A.-L."/>
            <person name="Moestl D."/>
            <person name="Mueller S."/>
            <person name="Obermaier B."/>
            <person name="Oliver S.G."/>
            <person name="Pallier C."/>
            <person name="Pascolo S."/>
            <person name="Pfeiffer F."/>
            <person name="Philippsen P."/>
            <person name="Planta R.J."/>
            <person name="Pohl F.M."/>
            <person name="Pohl T.M."/>
            <person name="Poehlmann R."/>
            <person name="Portetelle D."/>
            <person name="Purnelle B."/>
            <person name="Puzos V."/>
            <person name="Ramezani Rad M."/>
            <person name="Rasmussen S.W."/>
            <person name="Remacha M.A."/>
            <person name="Revuelta J.L."/>
            <person name="Richard G.-F."/>
            <person name="Rieger M."/>
            <person name="Rodrigues-Pousada C."/>
            <person name="Rose M."/>
            <person name="Rupp T."/>
            <person name="Santos M.A."/>
            <person name="Schwager C."/>
            <person name="Sensen C."/>
            <person name="Skala J."/>
            <person name="Soares H."/>
            <person name="Sor F."/>
            <person name="Stegemann J."/>
            <person name="Tettelin H."/>
            <person name="Thierry A."/>
            <person name="Tzermia M."/>
            <person name="Urrestarazu L.A."/>
            <person name="van Dyck L."/>
            <person name="van Vliet-Reedijk J.C."/>
            <person name="Valens M."/>
            <person name="Vandenbol M."/>
            <person name="Vilela C."/>
            <person name="Vissers S."/>
            <person name="von Wettstein D."/>
            <person name="Voss H."/>
            <person name="Wiemann S."/>
            <person name="Xu G."/>
            <person name="Zimmermann J."/>
            <person name="Haasemann M."/>
            <person name="Becker I."/>
            <person name="Mewes H.-W."/>
        </authorList>
    </citation>
    <scope>NUCLEOTIDE SEQUENCE [LARGE SCALE GENOMIC DNA]</scope>
    <source>
        <strain>ATCC 204508 / S288c</strain>
    </source>
</reference>
<reference key="3">
    <citation type="journal article" date="2014" name="G3 (Bethesda)">
        <title>The reference genome sequence of Saccharomyces cerevisiae: Then and now.</title>
        <authorList>
            <person name="Engel S.R."/>
            <person name="Dietrich F.S."/>
            <person name="Fisk D.G."/>
            <person name="Binkley G."/>
            <person name="Balakrishnan R."/>
            <person name="Costanzo M.C."/>
            <person name="Dwight S.S."/>
            <person name="Hitz B.C."/>
            <person name="Karra K."/>
            <person name="Nash R.S."/>
            <person name="Weng S."/>
            <person name="Wong E.D."/>
            <person name="Lloyd P."/>
            <person name="Skrzypek M.S."/>
            <person name="Miyasato S.R."/>
            <person name="Simison M."/>
            <person name="Cherry J.M."/>
        </authorList>
    </citation>
    <scope>GENOME REANNOTATION</scope>
    <source>
        <strain>ATCC 204508 / S288c</strain>
    </source>
</reference>
<protein>
    <recommendedName>
        <fullName>Putative uncharacterized protein YKL111C</fullName>
    </recommendedName>
</protein>